<sequence length="354" mass="39196">MRVTDFSFELPESLIAHYPQPERSRCRLLSLEGPTGALTHGTFTDLLDKLNPGDLLVFNNTRVIPARLFGRKASGGKIEVLVERMLDDKRILAHIRASKAPKPGTELLLGDDESIHATMTARHGALFEVEFNDPRPVLDILNAIGHMPLPPYIDRPDEDADRELYQTVYSEKPGAVAAPTAGLHFDEPLLAALREKGVEMAFVTLHVGAGTFQPVRVDTIEDHIMHSEYAEVPQEVVDAVLAAKARGNRVIAVGTTSVRSLESAAQAAKSDLIEPFFGDTQIFIYPGYQYKVIDALITNFHLPESTLIMLVSAFAGYQHTMNAYKTAVEQKYRFFSYGDAMFITCNPQAISERP</sequence>
<name>QUEA_SALTI</name>
<feature type="chain" id="PRO_0000165434" description="S-adenosylmethionine:tRNA ribosyltransferase-isomerase">
    <location>
        <begin position="1"/>
        <end position="354"/>
    </location>
</feature>
<protein>
    <recommendedName>
        <fullName evidence="1">S-adenosylmethionine:tRNA ribosyltransferase-isomerase</fullName>
        <ecNumber evidence="1">2.4.99.17</ecNumber>
    </recommendedName>
    <alternativeName>
        <fullName evidence="1">Queuosine biosynthesis protein QueA</fullName>
    </alternativeName>
</protein>
<proteinExistence type="inferred from homology"/>
<organism>
    <name type="scientific">Salmonella typhi</name>
    <dbReference type="NCBI Taxonomy" id="90370"/>
    <lineage>
        <taxon>Bacteria</taxon>
        <taxon>Pseudomonadati</taxon>
        <taxon>Pseudomonadota</taxon>
        <taxon>Gammaproteobacteria</taxon>
        <taxon>Enterobacterales</taxon>
        <taxon>Enterobacteriaceae</taxon>
        <taxon>Salmonella</taxon>
    </lineage>
</organism>
<comment type="function">
    <text evidence="1">Transfers and isomerizes the ribose moiety from AdoMet to the 7-aminomethyl group of 7-deazaguanine (preQ1-tRNA) to give epoxyqueuosine (oQ-tRNA).</text>
</comment>
<comment type="catalytic activity">
    <reaction evidence="1">
        <text>7-aminomethyl-7-carbaguanosine(34) in tRNA + S-adenosyl-L-methionine = epoxyqueuosine(34) in tRNA + adenine + L-methionine + 2 H(+)</text>
        <dbReference type="Rhea" id="RHEA:32155"/>
        <dbReference type="Rhea" id="RHEA-COMP:10342"/>
        <dbReference type="Rhea" id="RHEA-COMP:18582"/>
        <dbReference type="ChEBI" id="CHEBI:15378"/>
        <dbReference type="ChEBI" id="CHEBI:16708"/>
        <dbReference type="ChEBI" id="CHEBI:57844"/>
        <dbReference type="ChEBI" id="CHEBI:59789"/>
        <dbReference type="ChEBI" id="CHEBI:82833"/>
        <dbReference type="ChEBI" id="CHEBI:194443"/>
        <dbReference type="EC" id="2.4.99.17"/>
    </reaction>
</comment>
<comment type="pathway">
    <text evidence="1">tRNA modification; tRNA-queuosine biosynthesis.</text>
</comment>
<comment type="subunit">
    <text evidence="1">Monomer.</text>
</comment>
<comment type="subcellular location">
    <subcellularLocation>
        <location evidence="1">Cytoplasm</location>
    </subcellularLocation>
</comment>
<comment type="similarity">
    <text evidence="1">Belongs to the QueA family.</text>
</comment>
<evidence type="ECO:0000255" key="1">
    <source>
        <dbReference type="HAMAP-Rule" id="MF_00113"/>
    </source>
</evidence>
<reference key="1">
    <citation type="journal article" date="2001" name="Nature">
        <title>Complete genome sequence of a multiple drug resistant Salmonella enterica serovar Typhi CT18.</title>
        <authorList>
            <person name="Parkhill J."/>
            <person name="Dougan G."/>
            <person name="James K.D."/>
            <person name="Thomson N.R."/>
            <person name="Pickard D."/>
            <person name="Wain J."/>
            <person name="Churcher C.M."/>
            <person name="Mungall K.L."/>
            <person name="Bentley S.D."/>
            <person name="Holden M.T.G."/>
            <person name="Sebaihia M."/>
            <person name="Baker S."/>
            <person name="Basham D."/>
            <person name="Brooks K."/>
            <person name="Chillingworth T."/>
            <person name="Connerton P."/>
            <person name="Cronin A."/>
            <person name="Davis P."/>
            <person name="Davies R.M."/>
            <person name="Dowd L."/>
            <person name="White N."/>
            <person name="Farrar J."/>
            <person name="Feltwell T."/>
            <person name="Hamlin N."/>
            <person name="Haque A."/>
            <person name="Hien T.T."/>
            <person name="Holroyd S."/>
            <person name="Jagels K."/>
            <person name="Krogh A."/>
            <person name="Larsen T.S."/>
            <person name="Leather S."/>
            <person name="Moule S."/>
            <person name="O'Gaora P."/>
            <person name="Parry C."/>
            <person name="Quail M.A."/>
            <person name="Rutherford K.M."/>
            <person name="Simmonds M."/>
            <person name="Skelton J."/>
            <person name="Stevens K."/>
            <person name="Whitehead S."/>
            <person name="Barrell B.G."/>
        </authorList>
    </citation>
    <scope>NUCLEOTIDE SEQUENCE [LARGE SCALE GENOMIC DNA]</scope>
    <source>
        <strain>CT18</strain>
    </source>
</reference>
<reference key="2">
    <citation type="journal article" date="2003" name="J. Bacteriol.">
        <title>Comparative genomics of Salmonella enterica serovar Typhi strains Ty2 and CT18.</title>
        <authorList>
            <person name="Deng W."/>
            <person name="Liou S.-R."/>
            <person name="Plunkett G. III"/>
            <person name="Mayhew G.F."/>
            <person name="Rose D.J."/>
            <person name="Burland V."/>
            <person name="Kodoyianni V."/>
            <person name="Schwartz D.C."/>
            <person name="Blattner F.R."/>
        </authorList>
    </citation>
    <scope>NUCLEOTIDE SEQUENCE [LARGE SCALE GENOMIC DNA]</scope>
    <source>
        <strain>ATCC 700931 / Ty2</strain>
    </source>
</reference>
<gene>
    <name evidence="1" type="primary">queA</name>
    <name type="ordered locus">STY0442</name>
    <name type="ordered locus">t2459</name>
</gene>
<accession>Q8Z8Y1</accession>
<keyword id="KW-0963">Cytoplasm</keyword>
<keyword id="KW-0671">Queuosine biosynthesis</keyword>
<keyword id="KW-0949">S-adenosyl-L-methionine</keyword>
<keyword id="KW-0808">Transferase</keyword>
<dbReference type="EC" id="2.4.99.17" evidence="1"/>
<dbReference type="EMBL" id="AL513382">
    <property type="protein sequence ID" value="CAD08860.1"/>
    <property type="molecule type" value="Genomic_DNA"/>
</dbReference>
<dbReference type="EMBL" id="AE014613">
    <property type="protein sequence ID" value="AAO70049.1"/>
    <property type="molecule type" value="Genomic_DNA"/>
</dbReference>
<dbReference type="RefSeq" id="NP_454999.1">
    <property type="nucleotide sequence ID" value="NC_003198.1"/>
</dbReference>
<dbReference type="RefSeq" id="WP_001266528.1">
    <property type="nucleotide sequence ID" value="NZ_WSUR01000026.1"/>
</dbReference>
<dbReference type="SMR" id="Q8Z8Y1"/>
<dbReference type="STRING" id="220341.gene:17584465"/>
<dbReference type="KEGG" id="stt:t2459"/>
<dbReference type="KEGG" id="sty:STY0442"/>
<dbReference type="PATRIC" id="fig|220341.7.peg.440"/>
<dbReference type="eggNOG" id="COG0809">
    <property type="taxonomic scope" value="Bacteria"/>
</dbReference>
<dbReference type="HOGENOM" id="CLU_039110_1_0_6"/>
<dbReference type="OMA" id="YSYGDGM"/>
<dbReference type="OrthoDB" id="9805933at2"/>
<dbReference type="UniPathway" id="UPA00392"/>
<dbReference type="Proteomes" id="UP000000541">
    <property type="component" value="Chromosome"/>
</dbReference>
<dbReference type="Proteomes" id="UP000002670">
    <property type="component" value="Chromosome"/>
</dbReference>
<dbReference type="GO" id="GO:0005737">
    <property type="term" value="C:cytoplasm"/>
    <property type="evidence" value="ECO:0007669"/>
    <property type="project" value="UniProtKB-SubCell"/>
</dbReference>
<dbReference type="GO" id="GO:0051075">
    <property type="term" value="F:S-adenosylmethionine:tRNA ribosyltransferase-isomerase activity"/>
    <property type="evidence" value="ECO:0007669"/>
    <property type="project" value="UniProtKB-EC"/>
</dbReference>
<dbReference type="GO" id="GO:0008616">
    <property type="term" value="P:queuosine biosynthetic process"/>
    <property type="evidence" value="ECO:0007669"/>
    <property type="project" value="UniProtKB-UniRule"/>
</dbReference>
<dbReference type="GO" id="GO:0002099">
    <property type="term" value="P:tRNA wobble guanine modification"/>
    <property type="evidence" value="ECO:0007669"/>
    <property type="project" value="TreeGrafter"/>
</dbReference>
<dbReference type="FunFam" id="2.40.10.240:FF:000001">
    <property type="entry name" value="S-adenosylmethionine:tRNA ribosyltransferase-isomerase"/>
    <property type="match status" value="1"/>
</dbReference>
<dbReference type="FunFam" id="3.40.1780.10:FF:000001">
    <property type="entry name" value="S-adenosylmethionine:tRNA ribosyltransferase-isomerase"/>
    <property type="match status" value="1"/>
</dbReference>
<dbReference type="Gene3D" id="2.40.10.240">
    <property type="entry name" value="QueA-like"/>
    <property type="match status" value="1"/>
</dbReference>
<dbReference type="Gene3D" id="3.40.1780.10">
    <property type="entry name" value="QueA-like"/>
    <property type="match status" value="1"/>
</dbReference>
<dbReference type="HAMAP" id="MF_00113">
    <property type="entry name" value="QueA"/>
    <property type="match status" value="1"/>
</dbReference>
<dbReference type="InterPro" id="IPR003699">
    <property type="entry name" value="QueA"/>
</dbReference>
<dbReference type="InterPro" id="IPR042118">
    <property type="entry name" value="QueA_dom1"/>
</dbReference>
<dbReference type="InterPro" id="IPR042119">
    <property type="entry name" value="QueA_dom2"/>
</dbReference>
<dbReference type="InterPro" id="IPR036100">
    <property type="entry name" value="QueA_sf"/>
</dbReference>
<dbReference type="NCBIfam" id="NF001140">
    <property type="entry name" value="PRK00147.1"/>
    <property type="match status" value="1"/>
</dbReference>
<dbReference type="NCBIfam" id="TIGR00113">
    <property type="entry name" value="queA"/>
    <property type="match status" value="1"/>
</dbReference>
<dbReference type="PANTHER" id="PTHR30307">
    <property type="entry name" value="S-ADENOSYLMETHIONINE:TRNA RIBOSYLTRANSFERASE-ISOMERASE"/>
    <property type="match status" value="1"/>
</dbReference>
<dbReference type="PANTHER" id="PTHR30307:SF0">
    <property type="entry name" value="S-ADENOSYLMETHIONINE:TRNA RIBOSYLTRANSFERASE-ISOMERASE"/>
    <property type="match status" value="1"/>
</dbReference>
<dbReference type="Pfam" id="PF02547">
    <property type="entry name" value="Queuosine_synth"/>
    <property type="match status" value="1"/>
</dbReference>
<dbReference type="SUPFAM" id="SSF111337">
    <property type="entry name" value="QueA-like"/>
    <property type="match status" value="1"/>
</dbReference>